<protein>
    <recommendedName>
        <fullName>Zinc finger matrin-type protein 1</fullName>
    </recommendedName>
</protein>
<comment type="subcellular location">
    <subcellularLocation>
        <location evidence="3">Nucleus</location>
    </subcellularLocation>
</comment>
<comment type="alternative products">
    <event type="alternative splicing"/>
    <isoform>
        <id>Q5H9K5-1</id>
        <name>1</name>
        <sequence type="displayed"/>
    </isoform>
    <isoform>
        <id>Q5H9K5-2</id>
        <name>2</name>
        <sequence type="described" ref="VSP_029533"/>
    </isoform>
    <isoform>
        <id>Q5H9K5-3</id>
        <name>3</name>
        <sequence type="described" ref="VSP_062207"/>
    </isoform>
</comment>
<comment type="sequence caution" evidence="3">
    <conflict type="erroneous initiation">
        <sequence resource="EMBL-CDS" id="BAB47418"/>
    </conflict>
</comment>
<sequence>MESCSVTRLECSGAISAHCSLHLPGSSDSPASASQIAGTTDAIWNEQEKAELFTDKFCQVCGVMLQFESQRISHYEGEKHAQNVSFYFQMHGEQNEVPGKKMKMHVENFQVHRYEGVDKNKFCDLCNMMFSSPLIAQSHYVGKVHAKKLKQLMEEHDQASPSGFQPEMAFSMRTYVCHICSIAFTSLDMFRSHMQGSEHQIKESIVINLVKNSRKTQDSYQNECADYINVQKARGLEAKTCFRKMEESSLETRRYREVVDSRPRHRMFEQRLPFETFRTYAAPYNISQAMEKQLPHSKKTYDSFQDELEDYIKVQKARGLDPKTCFRKMRENSVDTHGYREMVDSGPRSRMCEQRFSHEASQTYQRPYHISPVESQLPQWLPTHSKRTYDSFQDELEDYIKVQKARGLEPKTCFRKIGDSSVETHRNREMVDVRPRHRMLEQKLPCETFQTYSGPYSISQVVENQLPHCLPAHDSKQRLDSISYCQLTRDCFPEKPVPLSLNQQENNSGSYSVESEVYKHLSSENNTADHQAGHKRKHQKRKRHLEEGKERPEKEQSKHKRKKSYEDTDLDKDKSIRQRKREEDRVKVSSGKLKHRKKKKSHDVPSEKEERKHRKEKKKSVEERTEEEMLWDESILGF</sequence>
<keyword id="KW-0025">Alternative splicing</keyword>
<keyword id="KW-0238">DNA-binding</keyword>
<keyword id="KW-0479">Metal-binding</keyword>
<keyword id="KW-0539">Nucleus</keyword>
<keyword id="KW-1185">Reference proteome</keyword>
<keyword id="KW-0677">Repeat</keyword>
<keyword id="KW-0862">Zinc</keyword>
<keyword id="KW-0863">Zinc-finger</keyword>
<reference key="1">
    <citation type="journal article" date="2001" name="DNA Res.">
        <title>Prediction of the coding sequences of unidentified human genes. XX. The complete sequences of 100 new cDNA clones from brain which code for large proteins in vitro.</title>
        <authorList>
            <person name="Nagase T."/>
            <person name="Nakayama M."/>
            <person name="Nakajima D."/>
            <person name="Kikuno R."/>
            <person name="Ohara O."/>
        </authorList>
    </citation>
    <scope>NUCLEOTIDE SEQUENCE [LARGE SCALE MRNA] (ISOFORM 2)</scope>
    <source>
        <tissue>Brain</tissue>
    </source>
</reference>
<reference key="2">
    <citation type="journal article" date="2005" name="Nature">
        <title>The DNA sequence of the human X chromosome.</title>
        <authorList>
            <person name="Ross M.T."/>
            <person name="Grafham D.V."/>
            <person name="Coffey A.J."/>
            <person name="Scherer S."/>
            <person name="McLay K."/>
            <person name="Muzny D."/>
            <person name="Platzer M."/>
            <person name="Howell G.R."/>
            <person name="Burrows C."/>
            <person name="Bird C.P."/>
            <person name="Frankish A."/>
            <person name="Lovell F.L."/>
            <person name="Howe K.L."/>
            <person name="Ashurst J.L."/>
            <person name="Fulton R.S."/>
            <person name="Sudbrak R."/>
            <person name="Wen G."/>
            <person name="Jones M.C."/>
            <person name="Hurles M.E."/>
            <person name="Andrews T.D."/>
            <person name="Scott C.E."/>
            <person name="Searle S."/>
            <person name="Ramser J."/>
            <person name="Whittaker A."/>
            <person name="Deadman R."/>
            <person name="Carter N.P."/>
            <person name="Hunt S.E."/>
            <person name="Chen R."/>
            <person name="Cree A."/>
            <person name="Gunaratne P."/>
            <person name="Havlak P."/>
            <person name="Hodgson A."/>
            <person name="Metzker M.L."/>
            <person name="Richards S."/>
            <person name="Scott G."/>
            <person name="Steffen D."/>
            <person name="Sodergren E."/>
            <person name="Wheeler D.A."/>
            <person name="Worley K.C."/>
            <person name="Ainscough R."/>
            <person name="Ambrose K.D."/>
            <person name="Ansari-Lari M.A."/>
            <person name="Aradhya S."/>
            <person name="Ashwell R.I."/>
            <person name="Babbage A.K."/>
            <person name="Bagguley C.L."/>
            <person name="Ballabio A."/>
            <person name="Banerjee R."/>
            <person name="Barker G.E."/>
            <person name="Barlow K.F."/>
            <person name="Barrett I.P."/>
            <person name="Bates K.N."/>
            <person name="Beare D.M."/>
            <person name="Beasley H."/>
            <person name="Beasley O."/>
            <person name="Beck A."/>
            <person name="Bethel G."/>
            <person name="Blechschmidt K."/>
            <person name="Brady N."/>
            <person name="Bray-Allen S."/>
            <person name="Bridgeman A.M."/>
            <person name="Brown A.J."/>
            <person name="Brown M.J."/>
            <person name="Bonnin D."/>
            <person name="Bruford E.A."/>
            <person name="Buhay C."/>
            <person name="Burch P."/>
            <person name="Burford D."/>
            <person name="Burgess J."/>
            <person name="Burrill W."/>
            <person name="Burton J."/>
            <person name="Bye J.M."/>
            <person name="Carder C."/>
            <person name="Carrel L."/>
            <person name="Chako J."/>
            <person name="Chapman J.C."/>
            <person name="Chavez D."/>
            <person name="Chen E."/>
            <person name="Chen G."/>
            <person name="Chen Y."/>
            <person name="Chen Z."/>
            <person name="Chinault C."/>
            <person name="Ciccodicola A."/>
            <person name="Clark S.Y."/>
            <person name="Clarke G."/>
            <person name="Clee C.M."/>
            <person name="Clegg S."/>
            <person name="Clerc-Blankenburg K."/>
            <person name="Clifford K."/>
            <person name="Cobley V."/>
            <person name="Cole C.G."/>
            <person name="Conquer J.S."/>
            <person name="Corby N."/>
            <person name="Connor R.E."/>
            <person name="David R."/>
            <person name="Davies J."/>
            <person name="Davis C."/>
            <person name="Davis J."/>
            <person name="Delgado O."/>
            <person name="Deshazo D."/>
            <person name="Dhami P."/>
            <person name="Ding Y."/>
            <person name="Dinh H."/>
            <person name="Dodsworth S."/>
            <person name="Draper H."/>
            <person name="Dugan-Rocha S."/>
            <person name="Dunham A."/>
            <person name="Dunn M."/>
            <person name="Durbin K.J."/>
            <person name="Dutta I."/>
            <person name="Eades T."/>
            <person name="Ellwood M."/>
            <person name="Emery-Cohen A."/>
            <person name="Errington H."/>
            <person name="Evans K.L."/>
            <person name="Faulkner L."/>
            <person name="Francis F."/>
            <person name="Frankland J."/>
            <person name="Fraser A.E."/>
            <person name="Galgoczy P."/>
            <person name="Gilbert J."/>
            <person name="Gill R."/>
            <person name="Gloeckner G."/>
            <person name="Gregory S.G."/>
            <person name="Gribble S."/>
            <person name="Griffiths C."/>
            <person name="Grocock R."/>
            <person name="Gu Y."/>
            <person name="Gwilliam R."/>
            <person name="Hamilton C."/>
            <person name="Hart E.A."/>
            <person name="Hawes A."/>
            <person name="Heath P.D."/>
            <person name="Heitmann K."/>
            <person name="Hennig S."/>
            <person name="Hernandez J."/>
            <person name="Hinzmann B."/>
            <person name="Ho S."/>
            <person name="Hoffs M."/>
            <person name="Howden P.J."/>
            <person name="Huckle E.J."/>
            <person name="Hume J."/>
            <person name="Hunt P.J."/>
            <person name="Hunt A.R."/>
            <person name="Isherwood J."/>
            <person name="Jacob L."/>
            <person name="Johnson D."/>
            <person name="Jones S."/>
            <person name="de Jong P.J."/>
            <person name="Joseph S.S."/>
            <person name="Keenan S."/>
            <person name="Kelly S."/>
            <person name="Kershaw J.K."/>
            <person name="Khan Z."/>
            <person name="Kioschis P."/>
            <person name="Klages S."/>
            <person name="Knights A.J."/>
            <person name="Kosiura A."/>
            <person name="Kovar-Smith C."/>
            <person name="Laird G.K."/>
            <person name="Langford C."/>
            <person name="Lawlor S."/>
            <person name="Leversha M."/>
            <person name="Lewis L."/>
            <person name="Liu W."/>
            <person name="Lloyd C."/>
            <person name="Lloyd D.M."/>
            <person name="Loulseged H."/>
            <person name="Loveland J.E."/>
            <person name="Lovell J.D."/>
            <person name="Lozado R."/>
            <person name="Lu J."/>
            <person name="Lyne R."/>
            <person name="Ma J."/>
            <person name="Maheshwari M."/>
            <person name="Matthews L.H."/>
            <person name="McDowall J."/>
            <person name="McLaren S."/>
            <person name="McMurray A."/>
            <person name="Meidl P."/>
            <person name="Meitinger T."/>
            <person name="Milne S."/>
            <person name="Miner G."/>
            <person name="Mistry S.L."/>
            <person name="Morgan M."/>
            <person name="Morris S."/>
            <person name="Mueller I."/>
            <person name="Mullikin J.C."/>
            <person name="Nguyen N."/>
            <person name="Nordsiek G."/>
            <person name="Nyakatura G."/>
            <person name="O'dell C.N."/>
            <person name="Okwuonu G."/>
            <person name="Palmer S."/>
            <person name="Pandian R."/>
            <person name="Parker D."/>
            <person name="Parrish J."/>
            <person name="Pasternak S."/>
            <person name="Patel D."/>
            <person name="Pearce A.V."/>
            <person name="Pearson D.M."/>
            <person name="Pelan S.E."/>
            <person name="Perez L."/>
            <person name="Porter K.M."/>
            <person name="Ramsey Y."/>
            <person name="Reichwald K."/>
            <person name="Rhodes S."/>
            <person name="Ridler K.A."/>
            <person name="Schlessinger D."/>
            <person name="Schueler M.G."/>
            <person name="Sehra H.K."/>
            <person name="Shaw-Smith C."/>
            <person name="Shen H."/>
            <person name="Sheridan E.M."/>
            <person name="Shownkeen R."/>
            <person name="Skuce C.D."/>
            <person name="Smith M.L."/>
            <person name="Sotheran E.C."/>
            <person name="Steingruber H.E."/>
            <person name="Steward C.A."/>
            <person name="Storey R."/>
            <person name="Swann R.M."/>
            <person name="Swarbreck D."/>
            <person name="Tabor P.E."/>
            <person name="Taudien S."/>
            <person name="Taylor T."/>
            <person name="Teague B."/>
            <person name="Thomas K."/>
            <person name="Thorpe A."/>
            <person name="Timms K."/>
            <person name="Tracey A."/>
            <person name="Trevanion S."/>
            <person name="Tromans A.C."/>
            <person name="d'Urso M."/>
            <person name="Verduzco D."/>
            <person name="Villasana D."/>
            <person name="Waldron L."/>
            <person name="Wall M."/>
            <person name="Wang Q."/>
            <person name="Warren J."/>
            <person name="Warry G.L."/>
            <person name="Wei X."/>
            <person name="West A."/>
            <person name="Whitehead S.L."/>
            <person name="Whiteley M.N."/>
            <person name="Wilkinson J.E."/>
            <person name="Willey D.L."/>
            <person name="Williams G."/>
            <person name="Williams L."/>
            <person name="Williamson A."/>
            <person name="Williamson H."/>
            <person name="Wilming L."/>
            <person name="Woodmansey R.L."/>
            <person name="Wray P.W."/>
            <person name="Yen J."/>
            <person name="Zhang J."/>
            <person name="Zhou J."/>
            <person name="Zoghbi H."/>
            <person name="Zorilla S."/>
            <person name="Buck D."/>
            <person name="Reinhardt R."/>
            <person name="Poustka A."/>
            <person name="Rosenthal A."/>
            <person name="Lehrach H."/>
            <person name="Meindl A."/>
            <person name="Minx P.J."/>
            <person name="Hillier L.W."/>
            <person name="Willard H.F."/>
            <person name="Wilson R.K."/>
            <person name="Waterston R.H."/>
            <person name="Rice C.M."/>
            <person name="Vaudin M."/>
            <person name="Coulson A."/>
            <person name="Nelson D.L."/>
            <person name="Weinstock G."/>
            <person name="Sulston J.E."/>
            <person name="Durbin R.M."/>
            <person name="Hubbard T."/>
            <person name="Gibbs R.A."/>
            <person name="Beck S."/>
            <person name="Rogers J."/>
            <person name="Bentley D.R."/>
        </authorList>
    </citation>
    <scope>NUCLEOTIDE SEQUENCE [LARGE SCALE GENOMIC DNA]</scope>
</reference>
<reference key="3">
    <citation type="journal article" date="2007" name="BMC Genomics">
        <title>The full-ORF clone resource of the German cDNA consortium.</title>
        <authorList>
            <person name="Bechtel S."/>
            <person name="Rosenfelder H."/>
            <person name="Duda A."/>
            <person name="Schmidt C.P."/>
            <person name="Ernst U."/>
            <person name="Wellenreuther R."/>
            <person name="Mehrle A."/>
            <person name="Schuster C."/>
            <person name="Bahr A."/>
            <person name="Bloecker H."/>
            <person name="Heubner D."/>
            <person name="Hoerlein A."/>
            <person name="Michel G."/>
            <person name="Wedler H."/>
            <person name="Koehrer K."/>
            <person name="Ottenwaelder B."/>
            <person name="Poustka A."/>
            <person name="Wiemann S."/>
            <person name="Schupp I."/>
        </authorList>
    </citation>
    <scope>NUCLEOTIDE SEQUENCE [LARGE SCALE MRNA] OF 429-638</scope>
    <source>
        <tissue>Brain</tissue>
    </source>
</reference>
<feature type="chain" id="PRO_0000311348" description="Zinc finger matrin-type protein 1">
    <location>
        <begin position="1"/>
        <end position="638"/>
    </location>
</feature>
<feature type="zinc finger region" description="Matrin-type 1">
    <location>
        <begin position="56"/>
        <end position="86"/>
    </location>
</feature>
<feature type="zinc finger region" description="Matrin-type 2">
    <location>
        <begin position="121"/>
        <end position="151"/>
    </location>
</feature>
<feature type="zinc finger region" description="Matrin-type 3">
    <location>
        <begin position="172"/>
        <end position="206"/>
    </location>
</feature>
<feature type="region of interest" description="Disordered" evidence="1">
    <location>
        <begin position="496"/>
        <end position="638"/>
    </location>
</feature>
<feature type="compositionally biased region" description="Polar residues" evidence="1">
    <location>
        <begin position="500"/>
        <end position="513"/>
    </location>
</feature>
<feature type="compositionally biased region" description="Basic residues" evidence="1">
    <location>
        <begin position="533"/>
        <end position="543"/>
    </location>
</feature>
<feature type="compositionally biased region" description="Basic and acidic residues" evidence="1">
    <location>
        <begin position="544"/>
        <end position="556"/>
    </location>
</feature>
<feature type="compositionally biased region" description="Basic and acidic residues" evidence="1">
    <location>
        <begin position="571"/>
        <end position="587"/>
    </location>
</feature>
<feature type="compositionally biased region" description="Basic residues" evidence="1">
    <location>
        <begin position="592"/>
        <end position="601"/>
    </location>
</feature>
<feature type="splice variant" id="VSP_029533" description="In isoform 2." evidence="2">
    <location>
        <begin position="1"/>
        <end position="171"/>
    </location>
</feature>
<feature type="splice variant" id="VSP_062207" description="In isoform 3.">
    <original>MESCSVTRLECSGAISAHCSLHLPGSSDSPASASQIAGTT</original>
    <variation>MAAAPSTVTPLAAESSPQEATVSAASSSSYTACAAAAAAAAAAAVIVPASSATSAPACPPAGGCGDGGGGGFGGSTMAAAGRGGSSFKVDTRPCLRE</variation>
    <location>
        <begin position="1"/>
        <end position="40"/>
    </location>
</feature>
<feature type="sequence variant" id="VAR_053766" description="In dbSNP:rs17282855.">
    <original>R</original>
    <variation>K</variation>
    <location>
        <position position="214"/>
    </location>
</feature>
<gene>
    <name type="primary">ZMAT1</name>
    <name type="synonym">KIAA1789</name>
</gene>
<proteinExistence type="evidence at transcript level"/>
<accession>Q5H9K5</accession>
<accession>A0A494C0A7</accession>
<accession>Q8NDS3</accession>
<accession>Q96JN6</accession>
<name>ZMAT1_HUMAN</name>
<evidence type="ECO:0000256" key="1">
    <source>
        <dbReference type="SAM" id="MobiDB-lite"/>
    </source>
</evidence>
<evidence type="ECO:0000303" key="2">
    <source>
    </source>
</evidence>
<evidence type="ECO:0000305" key="3"/>
<dbReference type="EMBL" id="AB058692">
    <property type="protein sequence ID" value="BAB47418.1"/>
    <property type="status" value="ALT_INIT"/>
    <property type="molecule type" value="mRNA"/>
</dbReference>
<dbReference type="EMBL" id="KF459260">
    <property type="status" value="NOT_ANNOTATED_CDS"/>
    <property type="molecule type" value="Genomic_DNA"/>
</dbReference>
<dbReference type="EMBL" id="KF510142">
    <property type="status" value="NOT_ANNOTATED_CDS"/>
    <property type="molecule type" value="Genomic_DNA"/>
</dbReference>
<dbReference type="EMBL" id="Z68326">
    <property type="status" value="NOT_ANNOTATED_CDS"/>
    <property type="molecule type" value="Genomic_DNA"/>
</dbReference>
<dbReference type="EMBL" id="Z68868">
    <property type="status" value="NOT_ANNOTATED_CDS"/>
    <property type="molecule type" value="Genomic_DNA"/>
</dbReference>
<dbReference type="EMBL" id="Z69304">
    <property type="status" value="NOT_ANNOTATED_CDS"/>
    <property type="molecule type" value="Genomic_DNA"/>
</dbReference>
<dbReference type="EMBL" id="AL831883">
    <property type="protein sequence ID" value="CAD38564.1"/>
    <property type="molecule type" value="mRNA"/>
</dbReference>
<dbReference type="CCDS" id="CCDS35348.1">
    <molecule id="Q5H9K5-1"/>
</dbReference>
<dbReference type="CCDS" id="CCDS94643.1">
    <molecule id="Q5H9K5-3"/>
</dbReference>
<dbReference type="RefSeq" id="NP_001011657.2">
    <molecule id="Q5H9K5-1"/>
    <property type="nucleotide sequence ID" value="NM_001011657.4"/>
</dbReference>
<dbReference type="RefSeq" id="NP_001269329.1">
    <molecule id="Q5H9K5-2"/>
    <property type="nucleotide sequence ID" value="NM_001282400.2"/>
</dbReference>
<dbReference type="RefSeq" id="NP_001269330.1">
    <molecule id="Q5H9K5-2"/>
    <property type="nucleotide sequence ID" value="NM_001282401.2"/>
</dbReference>
<dbReference type="RefSeq" id="NP_001381489.1">
    <molecule id="Q5H9K5-3"/>
    <property type="nucleotide sequence ID" value="NM_001394560.1"/>
</dbReference>
<dbReference type="RefSeq" id="XP_005262271.2">
    <property type="nucleotide sequence ID" value="XM_005262214.3"/>
</dbReference>
<dbReference type="RefSeq" id="XP_006724774.1">
    <molecule id="Q5H9K5-2"/>
    <property type="nucleotide sequence ID" value="XM_006724711.4"/>
</dbReference>
<dbReference type="RefSeq" id="XP_016885393.1">
    <property type="nucleotide sequence ID" value="XM_017029904.1"/>
</dbReference>
<dbReference type="RefSeq" id="XP_047298530.1">
    <molecule id="Q5H9K5-2"/>
    <property type="nucleotide sequence ID" value="XM_047442574.1"/>
</dbReference>
<dbReference type="RefSeq" id="XP_047298531.1">
    <molecule id="Q5H9K5-2"/>
    <property type="nucleotide sequence ID" value="XM_047442575.1"/>
</dbReference>
<dbReference type="RefSeq" id="XP_047298532.1">
    <molecule id="Q5H9K5-2"/>
    <property type="nucleotide sequence ID" value="XM_047442576.1"/>
</dbReference>
<dbReference type="RefSeq" id="XP_054183956.1">
    <molecule id="Q5H9K5-2"/>
    <property type="nucleotide sequence ID" value="XM_054327981.1"/>
</dbReference>
<dbReference type="RefSeq" id="XP_054183957.1">
    <molecule id="Q5H9K5-2"/>
    <property type="nucleotide sequence ID" value="XM_054327982.1"/>
</dbReference>
<dbReference type="RefSeq" id="XP_054183958.1">
    <molecule id="Q5H9K5-2"/>
    <property type="nucleotide sequence ID" value="XM_054327983.1"/>
</dbReference>
<dbReference type="RefSeq" id="XP_054183959.1">
    <molecule id="Q5H9K5-2"/>
    <property type="nucleotide sequence ID" value="XM_054327984.1"/>
</dbReference>
<dbReference type="SMR" id="Q5H9K5"/>
<dbReference type="BioGRID" id="124094">
    <property type="interactions" value="28"/>
</dbReference>
<dbReference type="FunCoup" id="Q5H9K5">
    <property type="interactions" value="16"/>
</dbReference>
<dbReference type="IntAct" id="Q5H9K5">
    <property type="interactions" value="8"/>
</dbReference>
<dbReference type="MINT" id="Q5H9K5"/>
<dbReference type="STRING" id="9606.ENSP00000361868"/>
<dbReference type="GlyGen" id="Q5H9K5">
    <property type="glycosylation" value="1 site, 1 O-linked glycan (1 site)"/>
</dbReference>
<dbReference type="iPTMnet" id="Q5H9K5"/>
<dbReference type="PhosphoSitePlus" id="Q5H9K5"/>
<dbReference type="BioMuta" id="ZMAT1"/>
<dbReference type="DMDM" id="74762181"/>
<dbReference type="MassIVE" id="Q5H9K5"/>
<dbReference type="PaxDb" id="9606-ENSP00000361868"/>
<dbReference type="PeptideAtlas" id="Q5H9K5"/>
<dbReference type="ProteomicsDB" id="62892">
    <molecule id="Q5H9K5-1"/>
</dbReference>
<dbReference type="ProteomicsDB" id="62893">
    <molecule id="Q5H9K5-2"/>
</dbReference>
<dbReference type="Antibodypedia" id="539">
    <property type="antibodies" value="54 antibodies from 15 providers"/>
</dbReference>
<dbReference type="DNASU" id="84460"/>
<dbReference type="Ensembl" id="ENST00000372782.4">
    <molecule id="Q5H9K5-1"/>
    <property type="protein sequence ID" value="ENSP00000361868.3"/>
    <property type="gene ID" value="ENSG00000166432.16"/>
</dbReference>
<dbReference type="Ensembl" id="ENST00000540921.5">
    <molecule id="Q5H9K5-1"/>
    <property type="protein sequence ID" value="ENSP00000437529.1"/>
    <property type="gene ID" value="ENSG00000166432.16"/>
</dbReference>
<dbReference type="Ensembl" id="ENST00000651725.2">
    <molecule id="Q5H9K5-3"/>
    <property type="protein sequence ID" value="ENSP00000498446.1"/>
    <property type="gene ID" value="ENSG00000166432.16"/>
</dbReference>
<dbReference type="GeneID" id="84460"/>
<dbReference type="KEGG" id="hsa:84460"/>
<dbReference type="MANE-Select" id="ENST00000651725.2">
    <molecule id="Q5H9K5-3"/>
    <property type="protein sequence ID" value="ENSP00000498446.1"/>
    <property type="RefSeq nucleotide sequence ID" value="NM_001394560.1"/>
    <property type="RefSeq protein sequence ID" value="NP_001381489.1"/>
</dbReference>
<dbReference type="UCSC" id="uc011mrl.3">
    <molecule id="Q5H9K5-1"/>
    <property type="organism name" value="human"/>
</dbReference>
<dbReference type="AGR" id="HGNC:29377"/>
<dbReference type="CTD" id="84460"/>
<dbReference type="DisGeNET" id="84460"/>
<dbReference type="GeneCards" id="ZMAT1"/>
<dbReference type="HGNC" id="HGNC:29377">
    <property type="gene designation" value="ZMAT1"/>
</dbReference>
<dbReference type="HPA" id="ENSG00000166432">
    <property type="expression patterns" value="Low tissue specificity"/>
</dbReference>
<dbReference type="MIM" id="301007">
    <property type="type" value="gene"/>
</dbReference>
<dbReference type="neXtProt" id="NX_Q5H9K5"/>
<dbReference type="OpenTargets" id="ENSG00000166432"/>
<dbReference type="PharmGKB" id="PA134880461"/>
<dbReference type="VEuPathDB" id="HostDB:ENSG00000166432"/>
<dbReference type="eggNOG" id="ENOG502S5D7">
    <property type="taxonomic scope" value="Eukaryota"/>
</dbReference>
<dbReference type="GeneTree" id="ENSGT00940000161244"/>
<dbReference type="HOGENOM" id="CLU_032533_1_0_1"/>
<dbReference type="InParanoid" id="Q5H9K5"/>
<dbReference type="OMA" id="DSISYWQ"/>
<dbReference type="OrthoDB" id="1925236at2759"/>
<dbReference type="PAN-GO" id="Q5H9K5">
    <property type="GO annotations" value="0 GO annotations based on evolutionary models"/>
</dbReference>
<dbReference type="PhylomeDB" id="Q5H9K5"/>
<dbReference type="TreeFam" id="TF337202"/>
<dbReference type="PathwayCommons" id="Q5H9K5"/>
<dbReference type="SignaLink" id="Q5H9K5"/>
<dbReference type="BioGRID-ORCS" id="84460">
    <property type="hits" value="11 hits in 782 CRISPR screens"/>
</dbReference>
<dbReference type="ChiTaRS" id="ZMAT1">
    <property type="organism name" value="human"/>
</dbReference>
<dbReference type="GenomeRNAi" id="84460"/>
<dbReference type="Pharos" id="Q5H9K5">
    <property type="development level" value="Tdark"/>
</dbReference>
<dbReference type="PRO" id="PR:Q5H9K5"/>
<dbReference type="Proteomes" id="UP000005640">
    <property type="component" value="Chromosome X"/>
</dbReference>
<dbReference type="RNAct" id="Q5H9K5">
    <property type="molecule type" value="protein"/>
</dbReference>
<dbReference type="Bgee" id="ENSG00000166432">
    <property type="expression patterns" value="Expressed in right uterine tube and 163 other cell types or tissues"/>
</dbReference>
<dbReference type="ExpressionAtlas" id="Q5H9K5">
    <property type="expression patterns" value="baseline and differential"/>
</dbReference>
<dbReference type="GO" id="GO:0005634">
    <property type="term" value="C:nucleus"/>
    <property type="evidence" value="ECO:0007669"/>
    <property type="project" value="UniProtKB-SubCell"/>
</dbReference>
<dbReference type="GO" id="GO:0003677">
    <property type="term" value="F:DNA binding"/>
    <property type="evidence" value="ECO:0007669"/>
    <property type="project" value="UniProtKB-KW"/>
</dbReference>
<dbReference type="GO" id="GO:0008270">
    <property type="term" value="F:zinc ion binding"/>
    <property type="evidence" value="ECO:0007669"/>
    <property type="project" value="UniProtKB-KW"/>
</dbReference>
<dbReference type="Gene3D" id="3.30.160.60">
    <property type="entry name" value="Classic Zinc Finger"/>
    <property type="match status" value="3"/>
</dbReference>
<dbReference type="InterPro" id="IPR003604">
    <property type="entry name" value="Matrin/U1-like-C_Znf_C2H2"/>
</dbReference>
<dbReference type="InterPro" id="IPR036236">
    <property type="entry name" value="Znf_C2H2_sf"/>
</dbReference>
<dbReference type="InterPro" id="IPR013087">
    <property type="entry name" value="Znf_C2H2_type"/>
</dbReference>
<dbReference type="PANTHER" id="PTHR46742">
    <property type="entry name" value="LYSINE-RICH COILED-COIL PROTEIN 1"/>
    <property type="match status" value="1"/>
</dbReference>
<dbReference type="PANTHER" id="PTHR46742:SF2">
    <property type="entry name" value="ZINC FINGER MATRIN-TYPE PROTEIN 1"/>
    <property type="match status" value="1"/>
</dbReference>
<dbReference type="Pfam" id="PF12874">
    <property type="entry name" value="zf-met"/>
    <property type="match status" value="3"/>
</dbReference>
<dbReference type="SMART" id="SM00355">
    <property type="entry name" value="ZnF_C2H2"/>
    <property type="match status" value="3"/>
</dbReference>
<dbReference type="SMART" id="SM00451">
    <property type="entry name" value="ZnF_U1"/>
    <property type="match status" value="3"/>
</dbReference>
<dbReference type="SUPFAM" id="SSF57667">
    <property type="entry name" value="beta-beta-alpha zinc fingers"/>
    <property type="match status" value="3"/>
</dbReference>
<organism>
    <name type="scientific">Homo sapiens</name>
    <name type="common">Human</name>
    <dbReference type="NCBI Taxonomy" id="9606"/>
    <lineage>
        <taxon>Eukaryota</taxon>
        <taxon>Metazoa</taxon>
        <taxon>Chordata</taxon>
        <taxon>Craniata</taxon>
        <taxon>Vertebrata</taxon>
        <taxon>Euteleostomi</taxon>
        <taxon>Mammalia</taxon>
        <taxon>Eutheria</taxon>
        <taxon>Euarchontoglires</taxon>
        <taxon>Primates</taxon>
        <taxon>Haplorrhini</taxon>
        <taxon>Catarrhini</taxon>
        <taxon>Hominidae</taxon>
        <taxon>Homo</taxon>
    </lineage>
</organism>